<reference key="1">
    <citation type="journal article" date="2007" name="PLoS Genet.">
        <title>Patterns and implications of gene gain and loss in the evolution of Prochlorococcus.</title>
        <authorList>
            <person name="Kettler G.C."/>
            <person name="Martiny A.C."/>
            <person name="Huang K."/>
            <person name="Zucker J."/>
            <person name="Coleman M.L."/>
            <person name="Rodrigue S."/>
            <person name="Chen F."/>
            <person name="Lapidus A."/>
            <person name="Ferriera S."/>
            <person name="Johnson J."/>
            <person name="Steglich C."/>
            <person name="Church G.M."/>
            <person name="Richardson P."/>
            <person name="Chisholm S.W."/>
        </authorList>
    </citation>
    <scope>NUCLEOTIDE SEQUENCE [LARGE SCALE GENOMIC DNA]</scope>
    <source>
        <strain>NATL1A</strain>
    </source>
</reference>
<protein>
    <recommendedName>
        <fullName evidence="1">Adenylosuccinate synthetase</fullName>
        <shortName evidence="1">AMPSase</shortName>
        <shortName evidence="1">AdSS</shortName>
        <ecNumber evidence="1">6.3.4.4</ecNumber>
    </recommendedName>
    <alternativeName>
        <fullName evidence="1">IMP--aspartate ligase</fullName>
    </alternativeName>
</protein>
<feature type="chain" id="PRO_1000000889" description="Adenylosuccinate synthetase">
    <location>
        <begin position="1"/>
        <end position="437"/>
    </location>
</feature>
<feature type="active site" description="Proton acceptor" evidence="1">
    <location>
        <position position="13"/>
    </location>
</feature>
<feature type="active site" description="Proton donor" evidence="1">
    <location>
        <position position="41"/>
    </location>
</feature>
<feature type="binding site" evidence="1">
    <location>
        <begin position="12"/>
        <end position="18"/>
    </location>
    <ligand>
        <name>GTP</name>
        <dbReference type="ChEBI" id="CHEBI:37565"/>
    </ligand>
</feature>
<feature type="binding site" description="in other chain" evidence="1">
    <location>
        <begin position="13"/>
        <end position="16"/>
    </location>
    <ligand>
        <name>IMP</name>
        <dbReference type="ChEBI" id="CHEBI:58053"/>
        <note>ligand shared between dimeric partners</note>
    </ligand>
</feature>
<feature type="binding site" evidence="1">
    <location>
        <position position="13"/>
    </location>
    <ligand>
        <name>Mg(2+)</name>
        <dbReference type="ChEBI" id="CHEBI:18420"/>
    </ligand>
</feature>
<feature type="binding site" description="in other chain" evidence="1">
    <location>
        <begin position="38"/>
        <end position="41"/>
    </location>
    <ligand>
        <name>IMP</name>
        <dbReference type="ChEBI" id="CHEBI:58053"/>
        <note>ligand shared between dimeric partners</note>
    </ligand>
</feature>
<feature type="binding site" evidence="1">
    <location>
        <begin position="40"/>
        <end position="42"/>
    </location>
    <ligand>
        <name>GTP</name>
        <dbReference type="ChEBI" id="CHEBI:37565"/>
    </ligand>
</feature>
<feature type="binding site" evidence="1">
    <location>
        <position position="40"/>
    </location>
    <ligand>
        <name>Mg(2+)</name>
        <dbReference type="ChEBI" id="CHEBI:18420"/>
    </ligand>
</feature>
<feature type="binding site" description="in other chain" evidence="1">
    <location>
        <position position="128"/>
    </location>
    <ligand>
        <name>IMP</name>
        <dbReference type="ChEBI" id="CHEBI:58053"/>
        <note>ligand shared between dimeric partners</note>
    </ligand>
</feature>
<feature type="binding site" evidence="1">
    <location>
        <position position="142"/>
    </location>
    <ligand>
        <name>IMP</name>
        <dbReference type="ChEBI" id="CHEBI:58053"/>
        <note>ligand shared between dimeric partners</note>
    </ligand>
</feature>
<feature type="binding site" description="in other chain" evidence="1">
    <location>
        <position position="223"/>
    </location>
    <ligand>
        <name>IMP</name>
        <dbReference type="ChEBI" id="CHEBI:58053"/>
        <note>ligand shared between dimeric partners</note>
    </ligand>
</feature>
<feature type="binding site" description="in other chain" evidence="1">
    <location>
        <position position="238"/>
    </location>
    <ligand>
        <name>IMP</name>
        <dbReference type="ChEBI" id="CHEBI:58053"/>
        <note>ligand shared between dimeric partners</note>
    </ligand>
</feature>
<feature type="binding site" evidence="1">
    <location>
        <begin position="298"/>
        <end position="304"/>
    </location>
    <ligand>
        <name>substrate</name>
    </ligand>
</feature>
<feature type="binding site" description="in other chain" evidence="1">
    <location>
        <position position="302"/>
    </location>
    <ligand>
        <name>IMP</name>
        <dbReference type="ChEBI" id="CHEBI:58053"/>
        <note>ligand shared between dimeric partners</note>
    </ligand>
</feature>
<feature type="binding site" evidence="1">
    <location>
        <position position="304"/>
    </location>
    <ligand>
        <name>GTP</name>
        <dbReference type="ChEBI" id="CHEBI:37565"/>
    </ligand>
</feature>
<feature type="binding site" evidence="1">
    <location>
        <begin position="330"/>
        <end position="332"/>
    </location>
    <ligand>
        <name>GTP</name>
        <dbReference type="ChEBI" id="CHEBI:37565"/>
    </ligand>
</feature>
<feature type="binding site" evidence="1">
    <location>
        <begin position="412"/>
        <end position="414"/>
    </location>
    <ligand>
        <name>GTP</name>
        <dbReference type="ChEBI" id="CHEBI:37565"/>
    </ligand>
</feature>
<accession>A2C0W6</accession>
<proteinExistence type="inferred from homology"/>
<evidence type="ECO:0000255" key="1">
    <source>
        <dbReference type="HAMAP-Rule" id="MF_00011"/>
    </source>
</evidence>
<gene>
    <name evidence="1" type="primary">purA</name>
    <name type="ordered locus">NATL1_05641</name>
</gene>
<dbReference type="EC" id="6.3.4.4" evidence="1"/>
<dbReference type="EMBL" id="CP000553">
    <property type="protein sequence ID" value="ABM75126.1"/>
    <property type="molecule type" value="Genomic_DNA"/>
</dbReference>
<dbReference type="RefSeq" id="WP_011294471.1">
    <property type="nucleotide sequence ID" value="NC_008819.1"/>
</dbReference>
<dbReference type="SMR" id="A2C0W6"/>
<dbReference type="KEGG" id="pme:NATL1_05641"/>
<dbReference type="eggNOG" id="COG0104">
    <property type="taxonomic scope" value="Bacteria"/>
</dbReference>
<dbReference type="HOGENOM" id="CLU_029848_0_0_3"/>
<dbReference type="UniPathway" id="UPA00075">
    <property type="reaction ID" value="UER00335"/>
</dbReference>
<dbReference type="Proteomes" id="UP000002592">
    <property type="component" value="Chromosome"/>
</dbReference>
<dbReference type="GO" id="GO:0005737">
    <property type="term" value="C:cytoplasm"/>
    <property type="evidence" value="ECO:0007669"/>
    <property type="project" value="UniProtKB-SubCell"/>
</dbReference>
<dbReference type="GO" id="GO:0004019">
    <property type="term" value="F:adenylosuccinate synthase activity"/>
    <property type="evidence" value="ECO:0007669"/>
    <property type="project" value="UniProtKB-UniRule"/>
</dbReference>
<dbReference type="GO" id="GO:0005525">
    <property type="term" value="F:GTP binding"/>
    <property type="evidence" value="ECO:0007669"/>
    <property type="project" value="UniProtKB-UniRule"/>
</dbReference>
<dbReference type="GO" id="GO:0000287">
    <property type="term" value="F:magnesium ion binding"/>
    <property type="evidence" value="ECO:0007669"/>
    <property type="project" value="UniProtKB-UniRule"/>
</dbReference>
<dbReference type="GO" id="GO:0044208">
    <property type="term" value="P:'de novo' AMP biosynthetic process"/>
    <property type="evidence" value="ECO:0007669"/>
    <property type="project" value="UniProtKB-UniRule"/>
</dbReference>
<dbReference type="GO" id="GO:0046040">
    <property type="term" value="P:IMP metabolic process"/>
    <property type="evidence" value="ECO:0007669"/>
    <property type="project" value="TreeGrafter"/>
</dbReference>
<dbReference type="CDD" id="cd03108">
    <property type="entry name" value="AdSS"/>
    <property type="match status" value="1"/>
</dbReference>
<dbReference type="FunFam" id="1.10.300.10:FF:000001">
    <property type="entry name" value="Adenylosuccinate synthetase"/>
    <property type="match status" value="1"/>
</dbReference>
<dbReference type="FunFam" id="3.90.170.10:FF:000001">
    <property type="entry name" value="Adenylosuccinate synthetase"/>
    <property type="match status" value="1"/>
</dbReference>
<dbReference type="Gene3D" id="3.40.440.10">
    <property type="entry name" value="Adenylosuccinate Synthetase, subunit A, domain 1"/>
    <property type="match status" value="1"/>
</dbReference>
<dbReference type="Gene3D" id="1.10.300.10">
    <property type="entry name" value="Adenylosuccinate Synthetase, subunit A, domain 2"/>
    <property type="match status" value="1"/>
</dbReference>
<dbReference type="Gene3D" id="3.90.170.10">
    <property type="entry name" value="Adenylosuccinate Synthetase, subunit A, domain 3"/>
    <property type="match status" value="1"/>
</dbReference>
<dbReference type="HAMAP" id="MF_00011">
    <property type="entry name" value="Adenylosucc_synth"/>
    <property type="match status" value="1"/>
</dbReference>
<dbReference type="InterPro" id="IPR018220">
    <property type="entry name" value="Adenylosuccin_syn_GTP-bd"/>
</dbReference>
<dbReference type="InterPro" id="IPR033128">
    <property type="entry name" value="Adenylosuccin_syn_Lys_AS"/>
</dbReference>
<dbReference type="InterPro" id="IPR042109">
    <property type="entry name" value="Adenylosuccinate_synth_dom1"/>
</dbReference>
<dbReference type="InterPro" id="IPR042110">
    <property type="entry name" value="Adenylosuccinate_synth_dom2"/>
</dbReference>
<dbReference type="InterPro" id="IPR042111">
    <property type="entry name" value="Adenylosuccinate_synth_dom3"/>
</dbReference>
<dbReference type="InterPro" id="IPR001114">
    <property type="entry name" value="Adenylosuccinate_synthetase"/>
</dbReference>
<dbReference type="InterPro" id="IPR027417">
    <property type="entry name" value="P-loop_NTPase"/>
</dbReference>
<dbReference type="NCBIfam" id="NF002223">
    <property type="entry name" value="PRK01117.1"/>
    <property type="match status" value="1"/>
</dbReference>
<dbReference type="NCBIfam" id="TIGR00184">
    <property type="entry name" value="purA"/>
    <property type="match status" value="1"/>
</dbReference>
<dbReference type="PANTHER" id="PTHR11846">
    <property type="entry name" value="ADENYLOSUCCINATE SYNTHETASE"/>
    <property type="match status" value="1"/>
</dbReference>
<dbReference type="PANTHER" id="PTHR11846:SF0">
    <property type="entry name" value="ADENYLOSUCCINATE SYNTHETASE"/>
    <property type="match status" value="1"/>
</dbReference>
<dbReference type="Pfam" id="PF00709">
    <property type="entry name" value="Adenylsucc_synt"/>
    <property type="match status" value="1"/>
</dbReference>
<dbReference type="SMART" id="SM00788">
    <property type="entry name" value="Adenylsucc_synt"/>
    <property type="match status" value="1"/>
</dbReference>
<dbReference type="SUPFAM" id="SSF52540">
    <property type="entry name" value="P-loop containing nucleoside triphosphate hydrolases"/>
    <property type="match status" value="1"/>
</dbReference>
<dbReference type="PROSITE" id="PS01266">
    <property type="entry name" value="ADENYLOSUCCIN_SYN_1"/>
    <property type="match status" value="1"/>
</dbReference>
<dbReference type="PROSITE" id="PS00513">
    <property type="entry name" value="ADENYLOSUCCIN_SYN_2"/>
    <property type="match status" value="1"/>
</dbReference>
<comment type="function">
    <text evidence="1">Plays an important role in the de novo pathway of purine nucleotide biosynthesis. Catalyzes the first committed step in the biosynthesis of AMP from IMP.</text>
</comment>
<comment type="catalytic activity">
    <reaction evidence="1">
        <text>IMP + L-aspartate + GTP = N(6)-(1,2-dicarboxyethyl)-AMP + GDP + phosphate + 2 H(+)</text>
        <dbReference type="Rhea" id="RHEA:15753"/>
        <dbReference type="ChEBI" id="CHEBI:15378"/>
        <dbReference type="ChEBI" id="CHEBI:29991"/>
        <dbReference type="ChEBI" id="CHEBI:37565"/>
        <dbReference type="ChEBI" id="CHEBI:43474"/>
        <dbReference type="ChEBI" id="CHEBI:57567"/>
        <dbReference type="ChEBI" id="CHEBI:58053"/>
        <dbReference type="ChEBI" id="CHEBI:58189"/>
        <dbReference type="EC" id="6.3.4.4"/>
    </reaction>
</comment>
<comment type="cofactor">
    <cofactor evidence="1">
        <name>Mg(2+)</name>
        <dbReference type="ChEBI" id="CHEBI:18420"/>
    </cofactor>
    <text evidence="1">Binds 1 Mg(2+) ion per subunit.</text>
</comment>
<comment type="pathway">
    <text evidence="1">Purine metabolism; AMP biosynthesis via de novo pathway; AMP from IMP: step 1/2.</text>
</comment>
<comment type="subunit">
    <text evidence="1">Homodimer.</text>
</comment>
<comment type="subcellular location">
    <subcellularLocation>
        <location evidence="1">Cytoplasm</location>
    </subcellularLocation>
</comment>
<comment type="similarity">
    <text evidence="1">Belongs to the adenylosuccinate synthetase family.</text>
</comment>
<keyword id="KW-0963">Cytoplasm</keyword>
<keyword id="KW-0342">GTP-binding</keyword>
<keyword id="KW-0436">Ligase</keyword>
<keyword id="KW-0460">Magnesium</keyword>
<keyword id="KW-0479">Metal-binding</keyword>
<keyword id="KW-0547">Nucleotide-binding</keyword>
<keyword id="KW-0658">Purine biosynthesis</keyword>
<sequence length="437" mass="48138">MANVVVIGAQWGDEGKGKITDLLSRSADVVVRYQGGVNAGHTIVVEDKVLKLHLIPSGILYPDTICLIGSGTVVDPKVMIKEIKMLEDNDIDISGLKLASTAHVTMPYHRLLDLAMEQKRGDQKIGTTGRGIGPTYADKSQRNGIRIIDLMSREKLQERLQVPLSEKNGLLQKIYGIEPLIIDEIIEEYLDYGKQLKKHIVDCNRTIHQAARKKKNILFEGAQGTLLDLDHGTYPYVTSSNPVSGGACIGAGVGPTLIDRVIGVAKAYTTRVGEGPFPTELHGSINDQLCDRGGEFGTTTGRRRRCGWFDGVIGKYAVEVNGLDCLAITKLDVLDELEEIDICVAYELNGKRIDYFPTSVEDFEKCNPIFKKLPGWRCSTENCRRLEDLPPAAMSYLRFLAELMEVPIAIVSLGANRDQTIVIEDPIHGPKRALLNS</sequence>
<organism>
    <name type="scientific">Prochlorococcus marinus (strain NATL1A)</name>
    <dbReference type="NCBI Taxonomy" id="167555"/>
    <lineage>
        <taxon>Bacteria</taxon>
        <taxon>Bacillati</taxon>
        <taxon>Cyanobacteriota</taxon>
        <taxon>Cyanophyceae</taxon>
        <taxon>Synechococcales</taxon>
        <taxon>Prochlorococcaceae</taxon>
        <taxon>Prochlorococcus</taxon>
    </lineage>
</organism>
<name>PURA_PROM1</name>